<accession>Q4V7B8</accession>
<proteinExistence type="evidence at transcript level"/>
<sequence length="350" mass="39228">MLHPATQQSPFMVDLHDQVHQGPVPLSYTVTTVTTQGFPLPASQHIPGCSAQQLPACSVMFSGQHYPLCCLPPPLIQACTMQQLPVPYHTYPHLISSDHYILHPPPPAPPPQPTHMAPLGQFVSLQTQHPRMPLQRLDNEMDLRGDQHPLGSFTYSTSATGPTLSPSVPLHYLPHDPLHQELSFGVPYSHMMPRRLSTQRYRLQQPLPPPPPPPPPSYYPSFLPYFLSMLPMSPTTVGPTISLDLDVDDVEMENYEALLNLAERLGDAKPRGLTKADIEQLPSYRFNPDSHQSEQTLCVVCFSDFEVRQLLRVLPCNHEFHAKCVDKWLKANRTCPICRADASEVPREAE</sequence>
<dbReference type="EMBL" id="BC098030">
    <property type="protein sequence ID" value="AAH98030.1"/>
    <property type="molecule type" value="mRNA"/>
</dbReference>
<dbReference type="RefSeq" id="NP_001019966.1">
    <property type="nucleotide sequence ID" value="NM_001024795.1"/>
</dbReference>
<dbReference type="SMR" id="Q4V7B8"/>
<dbReference type="FunCoup" id="Q4V7B8">
    <property type="interactions" value="1587"/>
</dbReference>
<dbReference type="STRING" id="10116.ENSRNOP00000068768"/>
<dbReference type="GlyGen" id="Q4V7B8">
    <property type="glycosylation" value="1 site"/>
</dbReference>
<dbReference type="PhosphoSitePlus" id="Q4V7B8"/>
<dbReference type="PaxDb" id="10116-ENSRNOP00000057548"/>
<dbReference type="GeneID" id="361212"/>
<dbReference type="KEGG" id="rno:361212"/>
<dbReference type="UCSC" id="RGD:1307212">
    <property type="organism name" value="rat"/>
</dbReference>
<dbReference type="AGR" id="RGD:1307212"/>
<dbReference type="CTD" id="22838"/>
<dbReference type="RGD" id="1307212">
    <property type="gene designation" value="Rnf44"/>
</dbReference>
<dbReference type="VEuPathDB" id="HostDB:ENSRNOG00000017641"/>
<dbReference type="eggNOG" id="KOG0800">
    <property type="taxonomic scope" value="Eukaryota"/>
</dbReference>
<dbReference type="HOGENOM" id="CLU_024578_0_0_1"/>
<dbReference type="InParanoid" id="Q4V7B8"/>
<dbReference type="OrthoDB" id="8062037at2759"/>
<dbReference type="PhylomeDB" id="Q4V7B8"/>
<dbReference type="PRO" id="PR:Q4V7B8"/>
<dbReference type="Proteomes" id="UP000002494">
    <property type="component" value="Chromosome 17"/>
</dbReference>
<dbReference type="Bgee" id="ENSRNOG00000017641">
    <property type="expression patterns" value="Expressed in thymus and 19 other cell types or tissues"/>
</dbReference>
<dbReference type="ExpressionAtlas" id="Q4V7B8">
    <property type="expression patterns" value="baseline and differential"/>
</dbReference>
<dbReference type="GO" id="GO:0061630">
    <property type="term" value="F:ubiquitin protein ligase activity"/>
    <property type="evidence" value="ECO:0000318"/>
    <property type="project" value="GO_Central"/>
</dbReference>
<dbReference type="GO" id="GO:0008270">
    <property type="term" value="F:zinc ion binding"/>
    <property type="evidence" value="ECO:0007669"/>
    <property type="project" value="UniProtKB-KW"/>
</dbReference>
<dbReference type="GO" id="GO:0016567">
    <property type="term" value="P:protein ubiquitination"/>
    <property type="evidence" value="ECO:0000318"/>
    <property type="project" value="GO_Central"/>
</dbReference>
<dbReference type="FunFam" id="3.30.40.10:FF:000024">
    <property type="entry name" value="RING finger protein 44 isoform X1"/>
    <property type="match status" value="1"/>
</dbReference>
<dbReference type="Gene3D" id="3.30.40.10">
    <property type="entry name" value="Zinc/RING finger domain, C3HC4 (zinc finger)"/>
    <property type="match status" value="1"/>
</dbReference>
<dbReference type="InterPro" id="IPR001841">
    <property type="entry name" value="Znf_RING"/>
</dbReference>
<dbReference type="InterPro" id="IPR013083">
    <property type="entry name" value="Znf_RING/FYVE/PHD"/>
</dbReference>
<dbReference type="PANTHER" id="PTHR46171">
    <property type="entry name" value="GH10160P"/>
    <property type="match status" value="1"/>
</dbReference>
<dbReference type="PANTHER" id="PTHR46171:SF2">
    <property type="entry name" value="RING FINGER PROTEIN 44"/>
    <property type="match status" value="1"/>
</dbReference>
<dbReference type="Pfam" id="PF13639">
    <property type="entry name" value="zf-RING_2"/>
    <property type="match status" value="1"/>
</dbReference>
<dbReference type="SMART" id="SM00184">
    <property type="entry name" value="RING"/>
    <property type="match status" value="1"/>
</dbReference>
<dbReference type="SUPFAM" id="SSF57850">
    <property type="entry name" value="RING/U-box"/>
    <property type="match status" value="1"/>
</dbReference>
<dbReference type="PROSITE" id="PS50089">
    <property type="entry name" value="ZF_RING_2"/>
    <property type="match status" value="1"/>
</dbReference>
<keyword id="KW-0479">Metal-binding</keyword>
<keyword id="KW-1185">Reference proteome</keyword>
<keyword id="KW-0862">Zinc</keyword>
<keyword id="KW-0863">Zinc-finger</keyword>
<gene>
    <name type="primary">Rnf44</name>
</gene>
<feature type="chain" id="PRO_0000273415" description="RING finger protein 44">
    <location>
        <begin position="1"/>
        <end position="350"/>
    </location>
</feature>
<feature type="zinc finger region" description="RING-type; atypical" evidence="1">
    <location>
        <begin position="298"/>
        <end position="339"/>
    </location>
</feature>
<organism>
    <name type="scientific">Rattus norvegicus</name>
    <name type="common">Rat</name>
    <dbReference type="NCBI Taxonomy" id="10116"/>
    <lineage>
        <taxon>Eukaryota</taxon>
        <taxon>Metazoa</taxon>
        <taxon>Chordata</taxon>
        <taxon>Craniata</taxon>
        <taxon>Vertebrata</taxon>
        <taxon>Euteleostomi</taxon>
        <taxon>Mammalia</taxon>
        <taxon>Eutheria</taxon>
        <taxon>Euarchontoglires</taxon>
        <taxon>Glires</taxon>
        <taxon>Rodentia</taxon>
        <taxon>Myomorpha</taxon>
        <taxon>Muroidea</taxon>
        <taxon>Muridae</taxon>
        <taxon>Murinae</taxon>
        <taxon>Rattus</taxon>
    </lineage>
</organism>
<reference key="1">
    <citation type="journal article" date="2004" name="Genome Res.">
        <title>The status, quality, and expansion of the NIH full-length cDNA project: the Mammalian Gene Collection (MGC).</title>
        <authorList>
            <consortium name="The MGC Project Team"/>
        </authorList>
    </citation>
    <scope>NUCLEOTIDE SEQUENCE [LARGE SCALE MRNA]</scope>
    <source>
        <tissue>Testis</tissue>
    </source>
</reference>
<evidence type="ECO:0000255" key="1">
    <source>
        <dbReference type="PROSITE-ProRule" id="PRU00175"/>
    </source>
</evidence>
<name>RNF44_RAT</name>
<protein>
    <recommendedName>
        <fullName>RING finger protein 44</fullName>
    </recommendedName>
</protein>